<proteinExistence type="inferred from homology"/>
<gene>
    <name evidence="1" type="primary">trpA</name>
    <name type="ordered locus">Daro_0871</name>
</gene>
<comment type="function">
    <text evidence="1">The alpha subunit is responsible for the aldol cleavage of indoleglycerol phosphate to indole and glyceraldehyde 3-phosphate.</text>
</comment>
<comment type="catalytic activity">
    <reaction evidence="1">
        <text>(1S,2R)-1-C-(indol-3-yl)glycerol 3-phosphate + L-serine = D-glyceraldehyde 3-phosphate + L-tryptophan + H2O</text>
        <dbReference type="Rhea" id="RHEA:10532"/>
        <dbReference type="ChEBI" id="CHEBI:15377"/>
        <dbReference type="ChEBI" id="CHEBI:33384"/>
        <dbReference type="ChEBI" id="CHEBI:57912"/>
        <dbReference type="ChEBI" id="CHEBI:58866"/>
        <dbReference type="ChEBI" id="CHEBI:59776"/>
        <dbReference type="EC" id="4.2.1.20"/>
    </reaction>
</comment>
<comment type="pathway">
    <text evidence="1">Amino-acid biosynthesis; L-tryptophan biosynthesis; L-tryptophan from chorismate: step 5/5.</text>
</comment>
<comment type="subunit">
    <text evidence="1">Tetramer of two alpha and two beta chains.</text>
</comment>
<comment type="similarity">
    <text evidence="1">Belongs to the TrpA family.</text>
</comment>
<accession>Q47HQ4</accession>
<reference key="1">
    <citation type="journal article" date="2009" name="BMC Genomics">
        <title>Metabolic analysis of the soil microbe Dechloromonas aromatica str. RCB: indications of a surprisingly complex life-style and cryptic anaerobic pathways for aromatic degradation.</title>
        <authorList>
            <person name="Salinero K.K."/>
            <person name="Keller K."/>
            <person name="Feil W.S."/>
            <person name="Feil H."/>
            <person name="Trong S."/>
            <person name="Di Bartolo G."/>
            <person name="Lapidus A."/>
        </authorList>
    </citation>
    <scope>NUCLEOTIDE SEQUENCE [LARGE SCALE GENOMIC DNA]</scope>
    <source>
        <strain>RCB</strain>
    </source>
</reference>
<protein>
    <recommendedName>
        <fullName evidence="1">Tryptophan synthase alpha chain</fullName>
        <ecNumber evidence="1">4.2.1.20</ecNumber>
    </recommendedName>
</protein>
<organism>
    <name type="scientific">Dechloromonas aromatica (strain RCB)</name>
    <dbReference type="NCBI Taxonomy" id="159087"/>
    <lineage>
        <taxon>Bacteria</taxon>
        <taxon>Pseudomonadati</taxon>
        <taxon>Pseudomonadota</taxon>
        <taxon>Betaproteobacteria</taxon>
        <taxon>Rhodocyclales</taxon>
        <taxon>Azonexaceae</taxon>
        <taxon>Dechloromonas</taxon>
    </lineage>
</organism>
<evidence type="ECO:0000255" key="1">
    <source>
        <dbReference type="HAMAP-Rule" id="MF_00131"/>
    </source>
</evidence>
<sequence length="268" mass="27940">MSRIKSAFERLNGEGRKALIPFITAGDPDAALTLPLMHTLVEAGADVIELGVPFSDPMADGPTIQRASERALARGMTLRKVLQLVVEFRKTDGKTPVVLMGYANPVEAMGLEKFAAAAAQAGVDGVLIVDYPPEEAAAFGAAMKAQGMDPIFLLAPTSSAERIAHVAEIASGYVYYVSLAGVTGSGALNVEAVAERLPLIREKTGLPVGVGFGIRDAATAARIAGIADAVVVGSRIIEEIEKSTAETACANVKALVADIRRGVDEVKK</sequence>
<keyword id="KW-0028">Amino-acid biosynthesis</keyword>
<keyword id="KW-0057">Aromatic amino acid biosynthesis</keyword>
<keyword id="KW-0456">Lyase</keyword>
<keyword id="KW-0822">Tryptophan biosynthesis</keyword>
<feature type="chain" id="PRO_1000018192" description="Tryptophan synthase alpha chain">
    <location>
        <begin position="1"/>
        <end position="268"/>
    </location>
</feature>
<feature type="active site" description="Proton acceptor" evidence="1">
    <location>
        <position position="49"/>
    </location>
</feature>
<feature type="active site" description="Proton acceptor" evidence="1">
    <location>
        <position position="60"/>
    </location>
</feature>
<dbReference type="EC" id="4.2.1.20" evidence="1"/>
<dbReference type="EMBL" id="CP000089">
    <property type="protein sequence ID" value="AAZ45627.1"/>
    <property type="molecule type" value="Genomic_DNA"/>
</dbReference>
<dbReference type="SMR" id="Q47HQ4"/>
<dbReference type="STRING" id="159087.Daro_0871"/>
<dbReference type="KEGG" id="dar:Daro_0871"/>
<dbReference type="eggNOG" id="COG0159">
    <property type="taxonomic scope" value="Bacteria"/>
</dbReference>
<dbReference type="HOGENOM" id="CLU_016734_0_0_4"/>
<dbReference type="OrthoDB" id="9804578at2"/>
<dbReference type="UniPathway" id="UPA00035">
    <property type="reaction ID" value="UER00044"/>
</dbReference>
<dbReference type="GO" id="GO:0005829">
    <property type="term" value="C:cytosol"/>
    <property type="evidence" value="ECO:0007669"/>
    <property type="project" value="TreeGrafter"/>
</dbReference>
<dbReference type="GO" id="GO:0004834">
    <property type="term" value="F:tryptophan synthase activity"/>
    <property type="evidence" value="ECO:0007669"/>
    <property type="project" value="UniProtKB-UniRule"/>
</dbReference>
<dbReference type="CDD" id="cd04724">
    <property type="entry name" value="Tryptophan_synthase_alpha"/>
    <property type="match status" value="1"/>
</dbReference>
<dbReference type="FunFam" id="3.20.20.70:FF:000037">
    <property type="entry name" value="Tryptophan synthase alpha chain"/>
    <property type="match status" value="1"/>
</dbReference>
<dbReference type="Gene3D" id="3.20.20.70">
    <property type="entry name" value="Aldolase class I"/>
    <property type="match status" value="1"/>
</dbReference>
<dbReference type="HAMAP" id="MF_00131">
    <property type="entry name" value="Trp_synth_alpha"/>
    <property type="match status" value="1"/>
</dbReference>
<dbReference type="InterPro" id="IPR013785">
    <property type="entry name" value="Aldolase_TIM"/>
</dbReference>
<dbReference type="InterPro" id="IPR011060">
    <property type="entry name" value="RibuloseP-bd_barrel"/>
</dbReference>
<dbReference type="InterPro" id="IPR018204">
    <property type="entry name" value="Trp_synthase_alpha_AS"/>
</dbReference>
<dbReference type="InterPro" id="IPR002028">
    <property type="entry name" value="Trp_synthase_suA"/>
</dbReference>
<dbReference type="NCBIfam" id="TIGR00262">
    <property type="entry name" value="trpA"/>
    <property type="match status" value="1"/>
</dbReference>
<dbReference type="PANTHER" id="PTHR43406:SF1">
    <property type="entry name" value="TRYPTOPHAN SYNTHASE ALPHA CHAIN, CHLOROPLASTIC"/>
    <property type="match status" value="1"/>
</dbReference>
<dbReference type="PANTHER" id="PTHR43406">
    <property type="entry name" value="TRYPTOPHAN SYNTHASE, ALPHA CHAIN"/>
    <property type="match status" value="1"/>
</dbReference>
<dbReference type="Pfam" id="PF00290">
    <property type="entry name" value="Trp_syntA"/>
    <property type="match status" value="1"/>
</dbReference>
<dbReference type="SUPFAM" id="SSF51366">
    <property type="entry name" value="Ribulose-phoshate binding barrel"/>
    <property type="match status" value="1"/>
</dbReference>
<dbReference type="PROSITE" id="PS00167">
    <property type="entry name" value="TRP_SYNTHASE_ALPHA"/>
    <property type="match status" value="1"/>
</dbReference>
<name>TRPA_DECAR</name>